<name>GREA_CHLP8</name>
<keyword id="KW-0175">Coiled coil</keyword>
<keyword id="KW-0238">DNA-binding</keyword>
<keyword id="KW-0804">Transcription</keyword>
<keyword id="KW-0805">Transcription regulation</keyword>
<gene>
    <name evidence="1" type="primary">greA</name>
    <name type="ordered locus">Cpar_1543</name>
</gene>
<comment type="function">
    <text evidence="1">Necessary for efficient RNA polymerase transcription elongation past template-encoded arresting sites. The arresting sites in DNA have the property of trapping a certain fraction of elongating RNA polymerases that pass through, resulting in locked ternary complexes. Cleavage of the nascent transcript by cleavage factors such as GreA or GreB allows the resumption of elongation from the new 3'terminus. GreA releases sequences of 2 to 3 nucleotides.</text>
</comment>
<comment type="similarity">
    <text evidence="1">Belongs to the GreA/GreB family.</text>
</comment>
<accession>B3QPT8</accession>
<proteinExistence type="inferred from homology"/>
<dbReference type="EMBL" id="CP001099">
    <property type="protein sequence ID" value="ACF11941.1"/>
    <property type="molecule type" value="Genomic_DNA"/>
</dbReference>
<dbReference type="RefSeq" id="WP_012502774.1">
    <property type="nucleotide sequence ID" value="NC_011027.1"/>
</dbReference>
<dbReference type="SMR" id="B3QPT8"/>
<dbReference type="STRING" id="517417.Cpar_1543"/>
<dbReference type="KEGG" id="cpc:Cpar_1543"/>
<dbReference type="eggNOG" id="COG0782">
    <property type="taxonomic scope" value="Bacteria"/>
</dbReference>
<dbReference type="HOGENOM" id="CLU_101379_2_0_10"/>
<dbReference type="OrthoDB" id="9808774at2"/>
<dbReference type="Proteomes" id="UP000008811">
    <property type="component" value="Chromosome"/>
</dbReference>
<dbReference type="GO" id="GO:0003677">
    <property type="term" value="F:DNA binding"/>
    <property type="evidence" value="ECO:0007669"/>
    <property type="project" value="UniProtKB-UniRule"/>
</dbReference>
<dbReference type="GO" id="GO:0070063">
    <property type="term" value="F:RNA polymerase binding"/>
    <property type="evidence" value="ECO:0007669"/>
    <property type="project" value="InterPro"/>
</dbReference>
<dbReference type="GO" id="GO:0006354">
    <property type="term" value="P:DNA-templated transcription elongation"/>
    <property type="evidence" value="ECO:0007669"/>
    <property type="project" value="TreeGrafter"/>
</dbReference>
<dbReference type="GO" id="GO:0032784">
    <property type="term" value="P:regulation of DNA-templated transcription elongation"/>
    <property type="evidence" value="ECO:0007669"/>
    <property type="project" value="UniProtKB-UniRule"/>
</dbReference>
<dbReference type="FunFam" id="1.10.287.180:FF:000001">
    <property type="entry name" value="Transcription elongation factor GreA"/>
    <property type="match status" value="1"/>
</dbReference>
<dbReference type="FunFam" id="3.10.50.30:FF:000001">
    <property type="entry name" value="Transcription elongation factor GreA"/>
    <property type="match status" value="1"/>
</dbReference>
<dbReference type="Gene3D" id="3.10.50.30">
    <property type="entry name" value="Transcription elongation factor, GreA/GreB, C-terminal domain"/>
    <property type="match status" value="1"/>
</dbReference>
<dbReference type="Gene3D" id="1.10.287.180">
    <property type="entry name" value="Transcription elongation factor, GreA/GreB, N-terminal domain"/>
    <property type="match status" value="1"/>
</dbReference>
<dbReference type="HAMAP" id="MF_00105">
    <property type="entry name" value="GreA_GreB"/>
    <property type="match status" value="1"/>
</dbReference>
<dbReference type="InterPro" id="IPR036953">
    <property type="entry name" value="GreA/GreB_C_sf"/>
</dbReference>
<dbReference type="InterPro" id="IPR018151">
    <property type="entry name" value="TF_GreA/GreB_CS"/>
</dbReference>
<dbReference type="InterPro" id="IPR006359">
    <property type="entry name" value="Tscrpt_elong_fac_GreA"/>
</dbReference>
<dbReference type="InterPro" id="IPR028624">
    <property type="entry name" value="Tscrpt_elong_fac_GreA/B"/>
</dbReference>
<dbReference type="InterPro" id="IPR001437">
    <property type="entry name" value="Tscrpt_elong_fac_GreA/B_C"/>
</dbReference>
<dbReference type="InterPro" id="IPR023459">
    <property type="entry name" value="Tscrpt_elong_fac_GreA/B_fam"/>
</dbReference>
<dbReference type="InterPro" id="IPR022691">
    <property type="entry name" value="Tscrpt_elong_fac_GreA/B_N"/>
</dbReference>
<dbReference type="InterPro" id="IPR036805">
    <property type="entry name" value="Tscrpt_elong_fac_GreA/B_N_sf"/>
</dbReference>
<dbReference type="NCBIfam" id="TIGR01462">
    <property type="entry name" value="greA"/>
    <property type="match status" value="1"/>
</dbReference>
<dbReference type="NCBIfam" id="NF001261">
    <property type="entry name" value="PRK00226.1-2"/>
    <property type="match status" value="1"/>
</dbReference>
<dbReference type="NCBIfam" id="NF001263">
    <property type="entry name" value="PRK00226.1-4"/>
    <property type="match status" value="1"/>
</dbReference>
<dbReference type="PANTHER" id="PTHR30437">
    <property type="entry name" value="TRANSCRIPTION ELONGATION FACTOR GREA"/>
    <property type="match status" value="1"/>
</dbReference>
<dbReference type="PANTHER" id="PTHR30437:SF4">
    <property type="entry name" value="TRANSCRIPTION ELONGATION FACTOR GREA"/>
    <property type="match status" value="1"/>
</dbReference>
<dbReference type="Pfam" id="PF01272">
    <property type="entry name" value="GreA_GreB"/>
    <property type="match status" value="1"/>
</dbReference>
<dbReference type="Pfam" id="PF03449">
    <property type="entry name" value="GreA_GreB_N"/>
    <property type="match status" value="1"/>
</dbReference>
<dbReference type="PIRSF" id="PIRSF006092">
    <property type="entry name" value="GreA_GreB"/>
    <property type="match status" value="1"/>
</dbReference>
<dbReference type="SUPFAM" id="SSF54534">
    <property type="entry name" value="FKBP-like"/>
    <property type="match status" value="1"/>
</dbReference>
<dbReference type="SUPFAM" id="SSF46557">
    <property type="entry name" value="GreA transcript cleavage protein, N-terminal domain"/>
    <property type="match status" value="1"/>
</dbReference>
<dbReference type="PROSITE" id="PS00829">
    <property type="entry name" value="GREAB_1"/>
    <property type="match status" value="1"/>
</dbReference>
<dbReference type="PROSITE" id="PS00830">
    <property type="entry name" value="GREAB_2"/>
    <property type="match status" value="1"/>
</dbReference>
<evidence type="ECO:0000255" key="1">
    <source>
        <dbReference type="HAMAP-Rule" id="MF_00105"/>
    </source>
</evidence>
<feature type="chain" id="PRO_1000094155" description="Transcription elongation factor GreA">
    <location>
        <begin position="1"/>
        <end position="159"/>
    </location>
</feature>
<feature type="coiled-coil region" evidence="1">
    <location>
        <begin position="43"/>
        <end position="76"/>
    </location>
</feature>
<sequence length="159" mass="17918">MSDRIYLTRDGYNRLKEELHLLSTQTRKEVLEKIAEARSHGDLSENAEYDAAREEQSQLEAKIGDLENKLASATILDPKQIKTDRVYILTSVKLRNLDDEDEIIEYTLVSSEEADSDLGKISVRSPVGRALIGKSVGDKVTISVPKGELHYEILDIFVK</sequence>
<protein>
    <recommendedName>
        <fullName evidence="1">Transcription elongation factor GreA</fullName>
    </recommendedName>
    <alternativeName>
        <fullName evidence="1">Transcript cleavage factor GreA</fullName>
    </alternativeName>
</protein>
<organism>
    <name type="scientific">Chlorobaculum parvum (strain DSM 263 / NCIMB 8327)</name>
    <name type="common">Chlorobium vibrioforme subsp. thiosulfatophilum</name>
    <dbReference type="NCBI Taxonomy" id="517417"/>
    <lineage>
        <taxon>Bacteria</taxon>
        <taxon>Pseudomonadati</taxon>
        <taxon>Chlorobiota</taxon>
        <taxon>Chlorobiia</taxon>
        <taxon>Chlorobiales</taxon>
        <taxon>Chlorobiaceae</taxon>
        <taxon>Chlorobaculum</taxon>
    </lineage>
</organism>
<reference key="1">
    <citation type="submission" date="2008-06" db="EMBL/GenBank/DDBJ databases">
        <title>Complete sequence of Chlorobaculum parvum NCIB 8327.</title>
        <authorList>
            <consortium name="US DOE Joint Genome Institute"/>
            <person name="Lucas S."/>
            <person name="Copeland A."/>
            <person name="Lapidus A."/>
            <person name="Glavina del Rio T."/>
            <person name="Dalin E."/>
            <person name="Tice H."/>
            <person name="Bruce D."/>
            <person name="Goodwin L."/>
            <person name="Pitluck S."/>
            <person name="Schmutz J."/>
            <person name="Larimer F."/>
            <person name="Land M."/>
            <person name="Hauser L."/>
            <person name="Kyrpides N."/>
            <person name="Mikhailova N."/>
            <person name="Zhao F."/>
            <person name="Li T."/>
            <person name="Liu Z."/>
            <person name="Overmann J."/>
            <person name="Bryant D.A."/>
            <person name="Richardson P."/>
        </authorList>
    </citation>
    <scope>NUCLEOTIDE SEQUENCE [LARGE SCALE GENOMIC DNA]</scope>
    <source>
        <strain>DSM 263 / NCIMB 8327</strain>
    </source>
</reference>